<evidence type="ECO:0000250" key="1"/>
<evidence type="ECO:0000250" key="2">
    <source>
        <dbReference type="UniProtKB" id="P19827"/>
    </source>
</evidence>
<evidence type="ECO:0000250" key="3">
    <source>
        <dbReference type="UniProtKB" id="Q0VCM5"/>
    </source>
</evidence>
<evidence type="ECO:0000255" key="4"/>
<evidence type="ECO:0000255" key="5">
    <source>
        <dbReference type="PROSITE-ProRule" id="PRU00219"/>
    </source>
</evidence>
<evidence type="ECO:0000255" key="6">
    <source>
        <dbReference type="PROSITE-ProRule" id="PRU00801"/>
    </source>
</evidence>
<evidence type="ECO:0000305" key="7"/>
<name>ITIH1_MESAU</name>
<sequence length="914" mass="101786">MDGAAVGLRVLLGLGLVSLLTLEAMPAAWGLATTGRPRAREKRQAVDTTPDGVLVKSLKVNCKVTSRFAHYIITSQVVNRQPNEAREVAFDVEIPKTAFISDFAITADGNTFIGDIKDKASAWKQYRKAISGENAGLVRTSGRNMEQFTIHITVGAQSKATFQLTYEEVLKRRLTQYDIVIKVKPKQLVQHFEIDVDIFEPQGISKLDAQASFLSKELAAQTIKESFSGKKGHVLFRPTVSQQQQPCPTCSTSWLNGDFKVTYDVNRDKLCDLLVANNYFAHFFAPKNLTNMSKNLVFVIDISGSMEGQKVKQTKEALLKILGDVKPGDSFDLVLFGSRVQSWKGSLVPATQANLQAAQDFVRRFSLAGATNLNGGLLRGIEILNKAQGSHPELSSPASILIMLTDGEPTEGETDRSQILKNVRNAIRGRFPLYNLGFGHDLDFNFLEVMSMENSGWAQRIYEDHDATQQLQGFYNQVANPLLTDVELQYPQDSVLSLTQHRHKQYYDGSEIVVAGRIADHKLSTFKADVRARGERQEFKATCLVDEEEMKKLLRERGHMLENHVERLWAYLTIQELLAKRMKMEGEERANLSSQALKMSLDYQFVTPLTSMTIRGLTDEDGLEPTIDKTPEDSQPLVKVGPRRTFVLSATQPSPTARSSVVSKLPNQVTGVDTDPHFIIYVPQKEDSLCFNINEEPGVILSLVQDPDTGFSVNGQLIGSKPSRPGQHEATYFGRLGISNPPSDFQLEVTPRNITLNPSSGGPVFSWRDQATPQKDGVLVTINKKRNLVVSVEDGATFEIVLHRTWKGSAAHQDFLGFYVLDSSRMSARTRGLLGQFFCPLDFEVSDIRPGSDPMKLDATMRVKNRQLAVTRGLQRDYSKDPRHGTEVSCWFIHNNGAGLIDGVHTDYIVPDIF</sequence>
<keyword id="KW-0903">Direct protein sequencing</keyword>
<keyword id="KW-0325">Glycoprotein</keyword>
<keyword id="KW-0597">Phosphoprotein</keyword>
<keyword id="KW-0646">Protease inhibitor</keyword>
<keyword id="KW-0654">Proteoglycan</keyword>
<keyword id="KW-1185">Reference proteome</keyword>
<keyword id="KW-0964">Secreted</keyword>
<keyword id="KW-0722">Serine protease inhibitor</keyword>
<keyword id="KW-0732">Signal</keyword>
<accession>P97278</accession>
<reference key="1">
    <citation type="journal article" date="1997" name="J. Biochem.">
        <title>Molecular cloning and sequencing of cDNAs encoding three heavy-chain precursors of the inter-alpha-trypsin inhibitor in Syrian hamster: implications for the evolution of the inter-alpha-trypsin inhibitor heavy chain family.</title>
        <authorList>
            <person name="Nakatani T."/>
            <person name="Suzuki Y."/>
            <person name="Yamamoto T."/>
            <person name="Sinohara H."/>
        </authorList>
    </citation>
    <scope>NUCLEOTIDE SEQUENCE [MRNA]</scope>
    <source>
        <tissue>Liver</tissue>
    </source>
</reference>
<reference key="2">
    <citation type="journal article" date="1996" name="J. Biochem.">
        <title>Inter-alpha-trypsin inhibitor and its related proteins in Syrian hamster urine and plasma.</title>
        <authorList>
            <person name="Yamamoto T."/>
            <person name="Yamamoto K."/>
            <person name="Sinohara H."/>
        </authorList>
    </citation>
    <scope>PROTEIN SEQUENCE OF 387-401 AND 461-475</scope>
    <scope>SUBUNIT</scope>
    <source>
        <tissue>Plasma</tissue>
    </source>
</reference>
<proteinExistence type="evidence at protein level"/>
<comment type="function">
    <text evidence="1">May act as a carrier of hyaluronan in serum or as a binding protein between hyaluronan and other matrix protein, including those on cell surfaces in tissues to regulate the localization, synthesis and degradation of hyaluronan which are essential to cells undergoing biological processes.</text>
</comment>
<comment type="subunit">
    <text evidence="2">I-alpha-I plasma protease inhibitors are assembled from one or two heavy chains (HC) and one light chain, bikunin. Inter-alpha-inhibitor (I-alpha-I) is composed of ITIH1/HC1, ITIH2/HC2 and bikunin. Interacts with TNFAIP6 (via Link and CUB domains).</text>
</comment>
<comment type="subcellular location">
    <subcellularLocation>
        <location>Secreted</location>
    </subcellularLocation>
</comment>
<comment type="PTM">
    <text evidence="1">Heavy chains are linked to bikunin via chondroitin 4-sulfate esterified to the alpha-carboxyl of the C-terminal aspartate after propeptide cleavage.</text>
</comment>
<comment type="PTM">
    <text evidence="1">The S-linked glycan is composed of two 6-carbon sugars, possibly Glc or Gal.</text>
</comment>
<comment type="similarity">
    <text evidence="7">Belongs to the ITIH family.</text>
</comment>
<gene>
    <name type="primary">ITIH1</name>
</gene>
<organism>
    <name type="scientific">Mesocricetus auratus</name>
    <name type="common">Golden hamster</name>
    <dbReference type="NCBI Taxonomy" id="10036"/>
    <lineage>
        <taxon>Eukaryota</taxon>
        <taxon>Metazoa</taxon>
        <taxon>Chordata</taxon>
        <taxon>Craniata</taxon>
        <taxon>Vertebrata</taxon>
        <taxon>Euteleostomi</taxon>
        <taxon>Mammalia</taxon>
        <taxon>Eutheria</taxon>
        <taxon>Euarchontoglires</taxon>
        <taxon>Glires</taxon>
        <taxon>Rodentia</taxon>
        <taxon>Myomorpha</taxon>
        <taxon>Muroidea</taxon>
        <taxon>Cricetidae</taxon>
        <taxon>Cricetinae</taxon>
        <taxon>Mesocricetus</taxon>
    </lineage>
</organism>
<protein>
    <recommendedName>
        <fullName>Inter-alpha-trypsin inhibitor heavy chain H1</fullName>
        <shortName>ITI heavy chain H1</shortName>
        <shortName>ITI-HC1</shortName>
        <shortName>Inter-alpha-inhibitor heavy chain 1</shortName>
    </recommendedName>
</protein>
<feature type="signal peptide" evidence="4">
    <location>
        <begin position="1"/>
        <end position="30"/>
    </location>
</feature>
<feature type="propeptide" id="PRO_0000016512" evidence="1">
    <location>
        <begin position="31"/>
        <end position="36"/>
    </location>
</feature>
<feature type="chain" id="PRO_0000016513" description="Inter-alpha-trypsin inhibitor heavy chain H1">
    <location>
        <begin position="37"/>
        <end position="675"/>
    </location>
</feature>
<feature type="propeptide" id="PRO_0000016514" evidence="1">
    <location>
        <begin position="676"/>
        <end position="914"/>
    </location>
</feature>
<feature type="domain" description="VIT" evidence="6">
    <location>
        <begin position="39"/>
        <end position="168"/>
    </location>
</feature>
<feature type="domain" description="VWFA" evidence="5">
    <location>
        <begin position="293"/>
        <end position="453"/>
    </location>
</feature>
<feature type="modified residue" description="Phosphoserine" evidence="2">
    <location>
        <position position="131"/>
    </location>
</feature>
<feature type="modified residue" description="Phosphothreonine" evidence="2">
    <location>
        <position position="405"/>
    </location>
</feature>
<feature type="modified residue" description="Phosphothreonine" evidence="2">
    <location>
        <position position="410"/>
    </location>
</feature>
<feature type="modified residue" description="Aspartate 1-(chondroitin 4-sulfate)-ester" evidence="1">
    <location>
        <position position="675"/>
    </location>
</feature>
<feature type="glycosylation site" description="S-linked (Hex...) cysteine" evidence="2">
    <location>
        <position position="62"/>
    </location>
</feature>
<feature type="glycosylation site" description="N-linked (GlcNAc...) asparagine" evidence="4">
    <location>
        <position position="288"/>
    </location>
</feature>
<feature type="glycosylation site" description="N-linked (GlcNAc...) asparagine" evidence="4">
    <location>
        <position position="291"/>
    </location>
</feature>
<feature type="glycosylation site" description="N-linked (GlcNAc...) asparagine" evidence="4">
    <location>
        <position position="591"/>
    </location>
</feature>
<feature type="glycosylation site" description="O-linked (GalNAc...) threonine" evidence="3">
    <location>
        <position position="656"/>
    </location>
</feature>
<dbReference type="EMBL" id="D89285">
    <property type="protein sequence ID" value="BAA13938.1"/>
    <property type="molecule type" value="mRNA"/>
</dbReference>
<dbReference type="PIR" id="JC5574">
    <property type="entry name" value="JC5574"/>
</dbReference>
<dbReference type="SMR" id="P97278"/>
<dbReference type="GlyCosmos" id="P97278">
    <property type="glycosylation" value="5 sites, No reported glycans"/>
</dbReference>
<dbReference type="Proteomes" id="UP000189706">
    <property type="component" value="Unplaced"/>
</dbReference>
<dbReference type="GO" id="GO:0005576">
    <property type="term" value="C:extracellular region"/>
    <property type="evidence" value="ECO:0007669"/>
    <property type="project" value="UniProtKB-SubCell"/>
</dbReference>
<dbReference type="GO" id="GO:0004867">
    <property type="term" value="F:serine-type endopeptidase inhibitor activity"/>
    <property type="evidence" value="ECO:0007669"/>
    <property type="project" value="UniProtKB-KW"/>
</dbReference>
<dbReference type="GO" id="GO:0030212">
    <property type="term" value="P:hyaluronan metabolic process"/>
    <property type="evidence" value="ECO:0007669"/>
    <property type="project" value="InterPro"/>
</dbReference>
<dbReference type="CDD" id="cd01461">
    <property type="entry name" value="vWA_interalpha_trypsin_inhibitor"/>
    <property type="match status" value="1"/>
</dbReference>
<dbReference type="FunFam" id="3.40.50.410:FF:000013">
    <property type="entry name" value="inter-alpha-trypsin inhibitor heavy chain H2"/>
    <property type="match status" value="1"/>
</dbReference>
<dbReference type="Gene3D" id="3.40.50.410">
    <property type="entry name" value="von Willebrand factor, type A domain"/>
    <property type="match status" value="1"/>
</dbReference>
<dbReference type="InterPro" id="IPR010600">
    <property type="entry name" value="ITI_HC_C"/>
</dbReference>
<dbReference type="InterPro" id="IPR050934">
    <property type="entry name" value="ITIH"/>
</dbReference>
<dbReference type="InterPro" id="IPR013694">
    <property type="entry name" value="VIT"/>
</dbReference>
<dbReference type="InterPro" id="IPR002035">
    <property type="entry name" value="VWF_A"/>
</dbReference>
<dbReference type="InterPro" id="IPR036465">
    <property type="entry name" value="vWFA_dom_sf"/>
</dbReference>
<dbReference type="PANTHER" id="PTHR10338">
    <property type="entry name" value="INTER-ALPHA-TRYPSIN INHIBITOR HEAVY CHAIN FAMILY MEMBER"/>
    <property type="match status" value="1"/>
</dbReference>
<dbReference type="PANTHER" id="PTHR10338:SF106">
    <property type="entry name" value="INTER-ALPHA-TRYPSIN INHIBITOR HEAVY CHAIN H1"/>
    <property type="match status" value="1"/>
</dbReference>
<dbReference type="Pfam" id="PF06668">
    <property type="entry name" value="ITI_HC_C"/>
    <property type="match status" value="1"/>
</dbReference>
<dbReference type="Pfam" id="PF08487">
    <property type="entry name" value="VIT"/>
    <property type="match status" value="1"/>
</dbReference>
<dbReference type="Pfam" id="PF00092">
    <property type="entry name" value="VWA"/>
    <property type="match status" value="1"/>
</dbReference>
<dbReference type="SMART" id="SM00609">
    <property type="entry name" value="VIT"/>
    <property type="match status" value="1"/>
</dbReference>
<dbReference type="SMART" id="SM00327">
    <property type="entry name" value="VWA"/>
    <property type="match status" value="1"/>
</dbReference>
<dbReference type="SUPFAM" id="SSF53300">
    <property type="entry name" value="vWA-like"/>
    <property type="match status" value="1"/>
</dbReference>
<dbReference type="PROSITE" id="PS51468">
    <property type="entry name" value="VIT"/>
    <property type="match status" value="1"/>
</dbReference>
<dbReference type="PROSITE" id="PS50234">
    <property type="entry name" value="VWFA"/>
    <property type="match status" value="1"/>
</dbReference>